<protein>
    <recommendedName>
        <fullName evidence="1">Catalase-peroxidase</fullName>
        <shortName evidence="1">CP</shortName>
        <ecNumber evidence="1">1.11.1.21</ecNumber>
    </recommendedName>
    <alternativeName>
        <fullName evidence="1">Peroxidase/catalase</fullName>
    </alternativeName>
</protein>
<feature type="signal peptide" evidence="1">
    <location>
        <begin position="1"/>
        <end position="23"/>
    </location>
</feature>
<feature type="chain" id="PRO_0000354796" description="Catalase-peroxidase">
    <location>
        <begin position="24"/>
        <end position="741"/>
    </location>
</feature>
<feature type="active site" description="Proton acceptor" evidence="1">
    <location>
        <position position="103"/>
    </location>
</feature>
<feature type="binding site" description="axial binding residue" evidence="1">
    <location>
        <position position="264"/>
    </location>
    <ligand>
        <name>heme b</name>
        <dbReference type="ChEBI" id="CHEBI:60344"/>
    </ligand>
    <ligandPart>
        <name>Fe</name>
        <dbReference type="ChEBI" id="CHEBI:18248"/>
    </ligandPart>
</feature>
<feature type="site" description="Transition state stabilizer" evidence="1">
    <location>
        <position position="99"/>
    </location>
</feature>
<feature type="cross-link" description="Tryptophyl-tyrosyl-methioninium (Trp-Tyr) (with M-249)" evidence="1">
    <location>
        <begin position="102"/>
        <end position="223"/>
    </location>
</feature>
<feature type="cross-link" description="Tryptophyl-tyrosyl-methioninium (Tyr-Met) (with W-102)" evidence="1">
    <location>
        <begin position="223"/>
        <end position="249"/>
    </location>
</feature>
<sequence>MLKKIVTALGMSGMLLASSNAIAEDTTTKNDNLSPQSVDLSPLRNLNKLDSPMDKDYNYHQAFKKLDTEQLKKDMQDLLTQSQDWWPADFGNYGPFFIRLSWHDAGTYRIYDGRGGANRGQQRFSPLNSWPDNVNLDKARQLLWPIKQKYGDAVSWSDLIVLAGTVSLESMGMKPIGFAFGREDDWQGDDTNWGLSPEEIMSSNVRDGKLAPAYAATQMGLIYVNPEGPDGKPDIKGAASEIRQAFRAMGMTDKETVALIAGGHTFGKTHGAVPEDKVKQTIGPAPDKAPIEQQGLGWHNSYGTGNGDDTMGSGLEGSWTSTPTFWNHDFLHNLYNLDWKKTLSPAGAHQWTPTNAKPENMVPDAHKPGVKHKPIMFTTDLALKEDDGFNKYTQEFYNNPEEFKEEFAKAWFKLTHRDMGPKSRYIGPWIPEQNFIWQDPVPAADYKQVSTQDIAQLEQDIINSGLTNQQLIKTAWDSASTYRKTDYRGGSNGARIALAPEKDWQMNEPAKLEVVLTKLKEIQTNFNNSKTDGTKVSLADLIVLGGNVGVEQAAKQAGYNIQMPFVPGRTDATQAQTDIESFNYLKTKSDGFINYTDGSVSADKLPQTLVEKASMLDLNIPEMTVLVGGMRALDVNYDNSQEGVLTTTPGQLNNSFFVNLLDMSTQWKKSDKKDGEYIGIDRKTGKQKWTASPVDLIFGSNSELKAVAQVYAENGNEQKFVNDFAKAWHKVMMLGRFDVQQ</sequence>
<proteinExistence type="inferred from homology"/>
<accession>A4IZ86</accession>
<organism>
    <name type="scientific">Francisella tularensis subsp. tularensis (strain WY96-3418)</name>
    <dbReference type="NCBI Taxonomy" id="418136"/>
    <lineage>
        <taxon>Bacteria</taxon>
        <taxon>Pseudomonadati</taxon>
        <taxon>Pseudomonadota</taxon>
        <taxon>Gammaproteobacteria</taxon>
        <taxon>Thiotrichales</taxon>
        <taxon>Francisellaceae</taxon>
        <taxon>Francisella</taxon>
    </lineage>
</organism>
<dbReference type="EC" id="1.11.1.21" evidence="1"/>
<dbReference type="EMBL" id="CP000608">
    <property type="protein sequence ID" value="ABO47237.1"/>
    <property type="molecule type" value="Genomic_DNA"/>
</dbReference>
<dbReference type="RefSeq" id="WP_003026820.1">
    <property type="nucleotide sequence ID" value="NC_009257.1"/>
</dbReference>
<dbReference type="SMR" id="A4IZ86"/>
<dbReference type="KEGG" id="ftw:FTW_1518"/>
<dbReference type="HOGENOM" id="CLU_025424_2_0_6"/>
<dbReference type="GO" id="GO:0005829">
    <property type="term" value="C:cytosol"/>
    <property type="evidence" value="ECO:0007669"/>
    <property type="project" value="TreeGrafter"/>
</dbReference>
<dbReference type="GO" id="GO:0004096">
    <property type="term" value="F:catalase activity"/>
    <property type="evidence" value="ECO:0007669"/>
    <property type="project" value="UniProtKB-UniRule"/>
</dbReference>
<dbReference type="GO" id="GO:0020037">
    <property type="term" value="F:heme binding"/>
    <property type="evidence" value="ECO:0007669"/>
    <property type="project" value="InterPro"/>
</dbReference>
<dbReference type="GO" id="GO:0046872">
    <property type="term" value="F:metal ion binding"/>
    <property type="evidence" value="ECO:0007669"/>
    <property type="project" value="UniProtKB-KW"/>
</dbReference>
<dbReference type="GO" id="GO:0070301">
    <property type="term" value="P:cellular response to hydrogen peroxide"/>
    <property type="evidence" value="ECO:0007669"/>
    <property type="project" value="TreeGrafter"/>
</dbReference>
<dbReference type="GO" id="GO:0042744">
    <property type="term" value="P:hydrogen peroxide catabolic process"/>
    <property type="evidence" value="ECO:0007669"/>
    <property type="project" value="UniProtKB-KW"/>
</dbReference>
<dbReference type="CDD" id="cd00649">
    <property type="entry name" value="catalase_peroxidase_1"/>
    <property type="match status" value="1"/>
</dbReference>
<dbReference type="CDD" id="cd08200">
    <property type="entry name" value="catalase_peroxidase_2"/>
    <property type="match status" value="1"/>
</dbReference>
<dbReference type="Gene3D" id="1.10.520.10">
    <property type="match status" value="2"/>
</dbReference>
<dbReference type="Gene3D" id="1.10.420.10">
    <property type="entry name" value="Peroxidase, domain 2"/>
    <property type="match status" value="2"/>
</dbReference>
<dbReference type="HAMAP" id="MF_01961">
    <property type="entry name" value="Catal_peroxid"/>
    <property type="match status" value="1"/>
</dbReference>
<dbReference type="InterPro" id="IPR000763">
    <property type="entry name" value="Catalase_peroxidase"/>
</dbReference>
<dbReference type="InterPro" id="IPR002016">
    <property type="entry name" value="Haem_peroxidase"/>
</dbReference>
<dbReference type="InterPro" id="IPR010255">
    <property type="entry name" value="Haem_peroxidase_sf"/>
</dbReference>
<dbReference type="InterPro" id="IPR019794">
    <property type="entry name" value="Peroxidases_AS"/>
</dbReference>
<dbReference type="InterPro" id="IPR019793">
    <property type="entry name" value="Peroxidases_heam-ligand_BS"/>
</dbReference>
<dbReference type="NCBIfam" id="TIGR00198">
    <property type="entry name" value="cat_per_HPI"/>
    <property type="match status" value="1"/>
</dbReference>
<dbReference type="NCBIfam" id="NF011635">
    <property type="entry name" value="PRK15061.1"/>
    <property type="match status" value="1"/>
</dbReference>
<dbReference type="PANTHER" id="PTHR30555:SF0">
    <property type="entry name" value="CATALASE-PEROXIDASE"/>
    <property type="match status" value="1"/>
</dbReference>
<dbReference type="PANTHER" id="PTHR30555">
    <property type="entry name" value="HYDROPEROXIDASE I, BIFUNCTIONAL CATALASE-PEROXIDASE"/>
    <property type="match status" value="1"/>
</dbReference>
<dbReference type="Pfam" id="PF00141">
    <property type="entry name" value="peroxidase"/>
    <property type="match status" value="2"/>
</dbReference>
<dbReference type="PRINTS" id="PR00460">
    <property type="entry name" value="BPEROXIDASE"/>
</dbReference>
<dbReference type="PRINTS" id="PR00458">
    <property type="entry name" value="PEROXIDASE"/>
</dbReference>
<dbReference type="SUPFAM" id="SSF48113">
    <property type="entry name" value="Heme-dependent peroxidases"/>
    <property type="match status" value="2"/>
</dbReference>
<dbReference type="PROSITE" id="PS00435">
    <property type="entry name" value="PEROXIDASE_1"/>
    <property type="match status" value="1"/>
</dbReference>
<dbReference type="PROSITE" id="PS00436">
    <property type="entry name" value="PEROXIDASE_2"/>
    <property type="match status" value="1"/>
</dbReference>
<dbReference type="PROSITE" id="PS50873">
    <property type="entry name" value="PEROXIDASE_4"/>
    <property type="match status" value="1"/>
</dbReference>
<keyword id="KW-0349">Heme</keyword>
<keyword id="KW-0376">Hydrogen peroxide</keyword>
<keyword id="KW-0408">Iron</keyword>
<keyword id="KW-0479">Metal-binding</keyword>
<keyword id="KW-0560">Oxidoreductase</keyword>
<keyword id="KW-0575">Peroxidase</keyword>
<keyword id="KW-0732">Signal</keyword>
<reference key="1">
    <citation type="journal article" date="2007" name="PLoS ONE">
        <title>Complete genomic characterization of a pathogenic A.II strain of Francisella tularensis subspecies tularensis.</title>
        <authorList>
            <person name="Beckstrom-Sternberg S.M."/>
            <person name="Auerbach R.K."/>
            <person name="Godbole S."/>
            <person name="Pearson J.V."/>
            <person name="Beckstrom-Sternberg J.S."/>
            <person name="Deng Z."/>
            <person name="Munk C."/>
            <person name="Kubota K."/>
            <person name="Zhou Y."/>
            <person name="Bruce D."/>
            <person name="Noronha J."/>
            <person name="Scheuermann R.H."/>
            <person name="Wang A."/>
            <person name="Wei X."/>
            <person name="Wang J."/>
            <person name="Hao J."/>
            <person name="Wagner D.M."/>
            <person name="Brettin T.S."/>
            <person name="Brown N."/>
            <person name="Gilna P."/>
            <person name="Keim P.S."/>
        </authorList>
    </citation>
    <scope>NUCLEOTIDE SEQUENCE [LARGE SCALE GENOMIC DNA]</scope>
    <source>
        <strain>WY96-3418</strain>
    </source>
</reference>
<name>KATG_FRATW</name>
<gene>
    <name evidence="1" type="primary">katG</name>
    <name type="ordered locus">FTW_1518</name>
</gene>
<comment type="function">
    <text evidence="1">Bifunctional enzyme with both catalase and broad-spectrum peroxidase activity.</text>
</comment>
<comment type="catalytic activity">
    <reaction evidence="1">
        <text>H2O2 + AH2 = A + 2 H2O</text>
        <dbReference type="Rhea" id="RHEA:30275"/>
        <dbReference type="ChEBI" id="CHEBI:13193"/>
        <dbReference type="ChEBI" id="CHEBI:15377"/>
        <dbReference type="ChEBI" id="CHEBI:16240"/>
        <dbReference type="ChEBI" id="CHEBI:17499"/>
        <dbReference type="EC" id="1.11.1.21"/>
    </reaction>
</comment>
<comment type="catalytic activity">
    <reaction evidence="1">
        <text>2 H2O2 = O2 + 2 H2O</text>
        <dbReference type="Rhea" id="RHEA:20309"/>
        <dbReference type="ChEBI" id="CHEBI:15377"/>
        <dbReference type="ChEBI" id="CHEBI:15379"/>
        <dbReference type="ChEBI" id="CHEBI:16240"/>
        <dbReference type="EC" id="1.11.1.21"/>
    </reaction>
</comment>
<comment type="cofactor">
    <cofactor evidence="1">
        <name>heme b</name>
        <dbReference type="ChEBI" id="CHEBI:60344"/>
    </cofactor>
    <text evidence="1">Binds 1 heme b (iron(II)-protoporphyrin IX) group per dimer.</text>
</comment>
<comment type="subunit">
    <text evidence="1">Homodimer or homotetramer.</text>
</comment>
<comment type="PTM">
    <text evidence="1">Formation of the three residue Trp-Tyr-Met cross-link is important for the catalase, but not the peroxidase activity of the enzyme.</text>
</comment>
<comment type="similarity">
    <text evidence="1">Belongs to the peroxidase family. Peroxidase/catalase subfamily.</text>
</comment>
<evidence type="ECO:0000255" key="1">
    <source>
        <dbReference type="HAMAP-Rule" id="MF_01961"/>
    </source>
</evidence>